<evidence type="ECO:0000255" key="1">
    <source>
        <dbReference type="HAMAP-Rule" id="MF_00054"/>
    </source>
</evidence>
<organism>
    <name type="scientific">Ureaplasma urealyticum serovar 10 (strain ATCC 33699 / Western)</name>
    <dbReference type="NCBI Taxonomy" id="565575"/>
    <lineage>
        <taxon>Bacteria</taxon>
        <taxon>Bacillati</taxon>
        <taxon>Mycoplasmatota</taxon>
        <taxon>Mycoplasmoidales</taxon>
        <taxon>Mycoplasmoidaceae</taxon>
        <taxon>Ureaplasma</taxon>
    </lineage>
</organism>
<gene>
    <name evidence="1" type="primary">fusA</name>
    <name type="ordered locus">UUR10_0612</name>
</gene>
<keyword id="KW-0963">Cytoplasm</keyword>
<keyword id="KW-0251">Elongation factor</keyword>
<keyword id="KW-0342">GTP-binding</keyword>
<keyword id="KW-0547">Nucleotide-binding</keyword>
<keyword id="KW-0648">Protein biosynthesis</keyword>
<name>EFG_UREU1</name>
<protein>
    <recommendedName>
        <fullName evidence="1">Elongation factor G</fullName>
        <shortName evidence="1">EF-G</shortName>
    </recommendedName>
</protein>
<dbReference type="EMBL" id="CP001184">
    <property type="protein sequence ID" value="ACI59919.1"/>
    <property type="molecule type" value="Genomic_DNA"/>
</dbReference>
<dbReference type="RefSeq" id="WP_004025638.1">
    <property type="nucleotide sequence ID" value="NC_011374.1"/>
</dbReference>
<dbReference type="SMR" id="B5ZC32"/>
<dbReference type="STRING" id="565575.UUR10_0612"/>
<dbReference type="GeneID" id="93849072"/>
<dbReference type="KEGG" id="uue:UUR10_0612"/>
<dbReference type="eggNOG" id="COG0480">
    <property type="taxonomic scope" value="Bacteria"/>
</dbReference>
<dbReference type="HOGENOM" id="CLU_002794_4_1_14"/>
<dbReference type="OrthoDB" id="9804431at2"/>
<dbReference type="Proteomes" id="UP000002018">
    <property type="component" value="Chromosome"/>
</dbReference>
<dbReference type="GO" id="GO:0005737">
    <property type="term" value="C:cytoplasm"/>
    <property type="evidence" value="ECO:0007669"/>
    <property type="project" value="UniProtKB-SubCell"/>
</dbReference>
<dbReference type="GO" id="GO:0005525">
    <property type="term" value="F:GTP binding"/>
    <property type="evidence" value="ECO:0007669"/>
    <property type="project" value="UniProtKB-UniRule"/>
</dbReference>
<dbReference type="GO" id="GO:0003924">
    <property type="term" value="F:GTPase activity"/>
    <property type="evidence" value="ECO:0007669"/>
    <property type="project" value="InterPro"/>
</dbReference>
<dbReference type="GO" id="GO:0003746">
    <property type="term" value="F:translation elongation factor activity"/>
    <property type="evidence" value="ECO:0007669"/>
    <property type="project" value="UniProtKB-UniRule"/>
</dbReference>
<dbReference type="GO" id="GO:0032790">
    <property type="term" value="P:ribosome disassembly"/>
    <property type="evidence" value="ECO:0007669"/>
    <property type="project" value="TreeGrafter"/>
</dbReference>
<dbReference type="CDD" id="cd01886">
    <property type="entry name" value="EF-G"/>
    <property type="match status" value="1"/>
</dbReference>
<dbReference type="CDD" id="cd16262">
    <property type="entry name" value="EFG_III"/>
    <property type="match status" value="1"/>
</dbReference>
<dbReference type="CDD" id="cd01434">
    <property type="entry name" value="EFG_mtEFG1_IV"/>
    <property type="match status" value="1"/>
</dbReference>
<dbReference type="CDD" id="cd03713">
    <property type="entry name" value="EFG_mtEFG_C"/>
    <property type="match status" value="1"/>
</dbReference>
<dbReference type="CDD" id="cd04088">
    <property type="entry name" value="EFG_mtEFG_II"/>
    <property type="match status" value="1"/>
</dbReference>
<dbReference type="FunFam" id="2.40.30.10:FF:000006">
    <property type="entry name" value="Elongation factor G"/>
    <property type="match status" value="1"/>
</dbReference>
<dbReference type="FunFam" id="3.30.230.10:FF:000003">
    <property type="entry name" value="Elongation factor G"/>
    <property type="match status" value="1"/>
</dbReference>
<dbReference type="FunFam" id="3.30.70.240:FF:000001">
    <property type="entry name" value="Elongation factor G"/>
    <property type="match status" value="1"/>
</dbReference>
<dbReference type="FunFam" id="3.30.70.870:FF:000001">
    <property type="entry name" value="Elongation factor G"/>
    <property type="match status" value="1"/>
</dbReference>
<dbReference type="FunFam" id="3.40.50.300:FF:000029">
    <property type="entry name" value="Elongation factor G"/>
    <property type="match status" value="1"/>
</dbReference>
<dbReference type="Gene3D" id="3.30.230.10">
    <property type="match status" value="1"/>
</dbReference>
<dbReference type="Gene3D" id="3.30.70.240">
    <property type="match status" value="1"/>
</dbReference>
<dbReference type="Gene3D" id="3.30.70.870">
    <property type="entry name" value="Elongation Factor G (Translational Gtpase), domain 3"/>
    <property type="match status" value="1"/>
</dbReference>
<dbReference type="Gene3D" id="3.40.50.300">
    <property type="entry name" value="P-loop containing nucleotide triphosphate hydrolases"/>
    <property type="match status" value="1"/>
</dbReference>
<dbReference type="Gene3D" id="2.40.30.10">
    <property type="entry name" value="Translation factors"/>
    <property type="match status" value="1"/>
</dbReference>
<dbReference type="HAMAP" id="MF_00054_B">
    <property type="entry name" value="EF_G_EF_2_B"/>
    <property type="match status" value="1"/>
</dbReference>
<dbReference type="InterPro" id="IPR041095">
    <property type="entry name" value="EFG_II"/>
</dbReference>
<dbReference type="InterPro" id="IPR009022">
    <property type="entry name" value="EFG_III"/>
</dbReference>
<dbReference type="InterPro" id="IPR035647">
    <property type="entry name" value="EFG_III/V"/>
</dbReference>
<dbReference type="InterPro" id="IPR047872">
    <property type="entry name" value="EFG_IV"/>
</dbReference>
<dbReference type="InterPro" id="IPR035649">
    <property type="entry name" value="EFG_V"/>
</dbReference>
<dbReference type="InterPro" id="IPR000640">
    <property type="entry name" value="EFG_V-like"/>
</dbReference>
<dbReference type="InterPro" id="IPR004161">
    <property type="entry name" value="EFTu-like_2"/>
</dbReference>
<dbReference type="InterPro" id="IPR031157">
    <property type="entry name" value="G_TR_CS"/>
</dbReference>
<dbReference type="InterPro" id="IPR027417">
    <property type="entry name" value="P-loop_NTPase"/>
</dbReference>
<dbReference type="InterPro" id="IPR020568">
    <property type="entry name" value="Ribosomal_Su5_D2-typ_SF"/>
</dbReference>
<dbReference type="InterPro" id="IPR014721">
    <property type="entry name" value="Ribsml_uS5_D2-typ_fold_subgr"/>
</dbReference>
<dbReference type="InterPro" id="IPR005225">
    <property type="entry name" value="Small_GTP-bd"/>
</dbReference>
<dbReference type="InterPro" id="IPR000795">
    <property type="entry name" value="T_Tr_GTP-bd_dom"/>
</dbReference>
<dbReference type="InterPro" id="IPR009000">
    <property type="entry name" value="Transl_B-barrel_sf"/>
</dbReference>
<dbReference type="InterPro" id="IPR004540">
    <property type="entry name" value="Transl_elong_EFG/EF2"/>
</dbReference>
<dbReference type="InterPro" id="IPR005517">
    <property type="entry name" value="Transl_elong_EFG/EF2_IV"/>
</dbReference>
<dbReference type="NCBIfam" id="TIGR00484">
    <property type="entry name" value="EF-G"/>
    <property type="match status" value="1"/>
</dbReference>
<dbReference type="NCBIfam" id="NF009381">
    <property type="entry name" value="PRK12740.1-5"/>
    <property type="match status" value="1"/>
</dbReference>
<dbReference type="NCBIfam" id="TIGR00231">
    <property type="entry name" value="small_GTP"/>
    <property type="match status" value="1"/>
</dbReference>
<dbReference type="PANTHER" id="PTHR43261:SF1">
    <property type="entry name" value="RIBOSOME-RELEASING FACTOR 2, MITOCHONDRIAL"/>
    <property type="match status" value="1"/>
</dbReference>
<dbReference type="PANTHER" id="PTHR43261">
    <property type="entry name" value="TRANSLATION ELONGATION FACTOR G-RELATED"/>
    <property type="match status" value="1"/>
</dbReference>
<dbReference type="Pfam" id="PF00679">
    <property type="entry name" value="EFG_C"/>
    <property type="match status" value="1"/>
</dbReference>
<dbReference type="Pfam" id="PF14492">
    <property type="entry name" value="EFG_III"/>
    <property type="match status" value="1"/>
</dbReference>
<dbReference type="Pfam" id="PF03764">
    <property type="entry name" value="EFG_IV"/>
    <property type="match status" value="1"/>
</dbReference>
<dbReference type="Pfam" id="PF00009">
    <property type="entry name" value="GTP_EFTU"/>
    <property type="match status" value="1"/>
</dbReference>
<dbReference type="Pfam" id="PF03144">
    <property type="entry name" value="GTP_EFTU_D2"/>
    <property type="match status" value="1"/>
</dbReference>
<dbReference type="PRINTS" id="PR00315">
    <property type="entry name" value="ELONGATNFCT"/>
</dbReference>
<dbReference type="SMART" id="SM00838">
    <property type="entry name" value="EFG_C"/>
    <property type="match status" value="1"/>
</dbReference>
<dbReference type="SMART" id="SM00889">
    <property type="entry name" value="EFG_IV"/>
    <property type="match status" value="1"/>
</dbReference>
<dbReference type="SUPFAM" id="SSF54980">
    <property type="entry name" value="EF-G C-terminal domain-like"/>
    <property type="match status" value="2"/>
</dbReference>
<dbReference type="SUPFAM" id="SSF52540">
    <property type="entry name" value="P-loop containing nucleoside triphosphate hydrolases"/>
    <property type="match status" value="1"/>
</dbReference>
<dbReference type="SUPFAM" id="SSF54211">
    <property type="entry name" value="Ribosomal protein S5 domain 2-like"/>
    <property type="match status" value="1"/>
</dbReference>
<dbReference type="SUPFAM" id="SSF50447">
    <property type="entry name" value="Translation proteins"/>
    <property type="match status" value="1"/>
</dbReference>
<dbReference type="PROSITE" id="PS00301">
    <property type="entry name" value="G_TR_1"/>
    <property type="match status" value="1"/>
</dbReference>
<dbReference type="PROSITE" id="PS51722">
    <property type="entry name" value="G_TR_2"/>
    <property type="match status" value="1"/>
</dbReference>
<feature type="chain" id="PRO_1000091778" description="Elongation factor G">
    <location>
        <begin position="1"/>
        <end position="688"/>
    </location>
</feature>
<feature type="domain" description="tr-type G">
    <location>
        <begin position="6"/>
        <end position="280"/>
    </location>
</feature>
<feature type="binding site" evidence="1">
    <location>
        <begin position="15"/>
        <end position="22"/>
    </location>
    <ligand>
        <name>GTP</name>
        <dbReference type="ChEBI" id="CHEBI:37565"/>
    </ligand>
</feature>
<feature type="binding site" evidence="1">
    <location>
        <begin position="79"/>
        <end position="83"/>
    </location>
    <ligand>
        <name>GTP</name>
        <dbReference type="ChEBI" id="CHEBI:37565"/>
    </ligand>
</feature>
<feature type="binding site" evidence="1">
    <location>
        <begin position="133"/>
        <end position="136"/>
    </location>
    <ligand>
        <name>GTP</name>
        <dbReference type="ChEBI" id="CHEBI:37565"/>
    </ligand>
</feature>
<reference key="1">
    <citation type="submission" date="2008-10" db="EMBL/GenBank/DDBJ databases">
        <title>Genome sequence of Ureaplasma urealyticum serovar 10 ATCC-33699.</title>
        <authorList>
            <person name="Shrivastava S."/>
            <person name="Methe B.A."/>
            <person name="Glass J."/>
            <person name="White K."/>
            <person name="Duffy L.B."/>
        </authorList>
    </citation>
    <scope>NUCLEOTIDE SEQUENCE [LARGE SCALE GENOMIC DNA]</scope>
    <source>
        <strain>ATCC 33699 / Western</strain>
    </source>
</reference>
<sequence>MSKELKLFRNFGIMAHIDAGKTTTSERILYHTGKNHKIGETHDGAATMDWMAQEKERGITITSAATYAKWKGHSLNLIDTPGHVDFTVEVERSLRVLDGAVAVLDGQNGVEPQTETVWRQATKYNVPRIVFVNKMDKTGADFYYSIETMKNRLGVKATAIQIPIGAEADFVGSIDLIEMKAYIYDGQADEEYKIEDIPADYVTKAQVMRSQMIDDVAIFDDEVMEKYLSGEELSHEDIKKCIRKGVISTELYPVLCGTAFKNKGVKKLLDAVVDFLPSPIDVPPIKGVDDHGNPIEYHNDPSEPFAALAFKVATDPFVGRLTYIRVYSGKLDKGTYVYNATKDKKERISRLVKMHSNNRDEIDSISAGDICAVIGLKDTTTGDTICDEKKPVILEQMVFAEPVISLSVEPKTKADQEKMSLALSKLAEEDPTFRTYTNEETGQTIIAGMGELHLDVLVDRMRREFNVQVNVGAPQVSYRETFTEIADAEGKYIKQSGGRGQYGHVWIKFEPNHDKGFEFVDNIVGGKVPKEYIKEVENGLIEALTSGPIAGYQTIDVKATIFDGSYHDVDSSGMAYKIAASLAFKEAAKVCKPVLLEPIMSVDVTTPDDYFGTVMGDISKRRGVIEGQEQRGNAQAIKAKVPLSEMFGYATDLRSNTQGRGQYIMQFSHYAQAPKSVTEEVMAARAKK</sequence>
<accession>B5ZC32</accession>
<comment type="function">
    <text evidence="1">Catalyzes the GTP-dependent ribosomal translocation step during translation elongation. During this step, the ribosome changes from the pre-translocational (PRE) to the post-translocational (POST) state as the newly formed A-site-bound peptidyl-tRNA and P-site-bound deacylated tRNA move to the P and E sites, respectively. Catalyzes the coordinated movement of the two tRNA molecules, the mRNA and conformational changes in the ribosome.</text>
</comment>
<comment type="subcellular location">
    <subcellularLocation>
        <location evidence="1">Cytoplasm</location>
    </subcellularLocation>
</comment>
<comment type="similarity">
    <text evidence="1">Belongs to the TRAFAC class translation factor GTPase superfamily. Classic translation factor GTPase family. EF-G/EF-2 subfamily.</text>
</comment>
<proteinExistence type="inferred from homology"/>